<feature type="chain" id="PRO_0000114501" description="Alanine racemase 2">
    <location>
        <begin position="1"/>
        <end position="394"/>
    </location>
</feature>
<feature type="active site" description="Proton acceptor; specific for D-alanine" evidence="1">
    <location>
        <position position="39"/>
    </location>
</feature>
<feature type="active site" description="Proton acceptor; specific for L-alanine" evidence="1">
    <location>
        <position position="272"/>
    </location>
</feature>
<feature type="binding site" evidence="1">
    <location>
        <position position="139"/>
    </location>
    <ligand>
        <name>substrate</name>
    </ligand>
</feature>
<feature type="binding site" evidence="1">
    <location>
        <position position="320"/>
    </location>
    <ligand>
        <name>substrate</name>
    </ligand>
</feature>
<feature type="modified residue" description="N6-(pyridoxal phosphate)lysine" evidence="1">
    <location>
        <position position="39"/>
    </location>
</feature>
<feature type="strand" evidence="2">
    <location>
        <begin position="8"/>
        <end position="13"/>
    </location>
</feature>
<feature type="helix" evidence="2">
    <location>
        <begin position="14"/>
        <end position="27"/>
    </location>
</feature>
<feature type="strand" evidence="2">
    <location>
        <begin position="33"/>
        <end position="37"/>
    </location>
</feature>
<feature type="helix" evidence="2">
    <location>
        <begin position="39"/>
        <end position="43"/>
    </location>
</feature>
<feature type="helix" evidence="2">
    <location>
        <begin position="47"/>
        <end position="56"/>
    </location>
</feature>
<feature type="strand" evidence="2">
    <location>
        <begin position="61"/>
        <end position="66"/>
    </location>
</feature>
<feature type="helix" evidence="2">
    <location>
        <begin position="67"/>
        <end position="75"/>
    </location>
</feature>
<feature type="strand" evidence="2">
    <location>
        <begin position="82"/>
        <end position="87"/>
    </location>
</feature>
<feature type="helix" evidence="2">
    <location>
        <begin position="90"/>
        <end position="92"/>
    </location>
</feature>
<feature type="helix" evidence="2">
    <location>
        <begin position="93"/>
        <end position="98"/>
    </location>
</feature>
<feature type="strand" evidence="2">
    <location>
        <begin position="102"/>
        <end position="105"/>
    </location>
</feature>
<feature type="helix" evidence="2">
    <location>
        <begin position="108"/>
        <end position="120"/>
    </location>
</feature>
<feature type="strand" evidence="2">
    <location>
        <begin position="127"/>
        <end position="133"/>
    </location>
</feature>
<feature type="strand" evidence="2">
    <location>
        <begin position="139"/>
        <end position="142"/>
    </location>
</feature>
<feature type="helix" evidence="2">
    <location>
        <begin position="145"/>
        <end position="157"/>
    </location>
</feature>
<feature type="strand" evidence="2">
    <location>
        <begin position="161"/>
        <end position="167"/>
    </location>
</feature>
<feature type="helix" evidence="2">
    <location>
        <begin position="179"/>
        <end position="197"/>
    </location>
</feature>
<feature type="strand" evidence="2">
    <location>
        <begin position="204"/>
        <end position="208"/>
    </location>
</feature>
<feature type="helix" evidence="2">
    <location>
        <begin position="210"/>
        <end position="215"/>
    </location>
</feature>
<feature type="helix" evidence="2">
    <location>
        <begin position="217"/>
        <end position="219"/>
    </location>
</feature>
<feature type="strand" evidence="2">
    <location>
        <begin position="223"/>
        <end position="226"/>
    </location>
</feature>
<feature type="helix" evidence="2">
    <location>
        <begin position="228"/>
        <end position="231"/>
    </location>
</feature>
<feature type="helix" evidence="2">
    <location>
        <begin position="237"/>
        <end position="241"/>
    </location>
</feature>
<feature type="strand" evidence="2">
    <location>
        <begin position="251"/>
        <end position="256"/>
    </location>
</feature>
<feature type="strand" evidence="2">
    <location>
        <begin position="259"/>
        <end position="262"/>
    </location>
</feature>
<feature type="strand" evidence="2">
    <location>
        <begin position="269"/>
        <end position="271"/>
    </location>
</feature>
<feature type="helix" evidence="2">
    <location>
        <begin position="272"/>
        <end position="274"/>
    </location>
</feature>
<feature type="strand" evidence="2">
    <location>
        <begin position="283"/>
        <end position="288"/>
    </location>
</feature>
<feature type="helix" evidence="2">
    <location>
        <begin position="291"/>
        <end position="293"/>
    </location>
</feature>
<feature type="helix" evidence="2">
    <location>
        <begin position="297"/>
        <end position="299"/>
    </location>
</feature>
<feature type="turn" evidence="2">
    <location>
        <begin position="300"/>
        <end position="302"/>
    </location>
</feature>
<feature type="strand" evidence="2">
    <location>
        <begin position="304"/>
        <end position="307"/>
    </location>
</feature>
<feature type="strand" evidence="2">
    <location>
        <begin position="310"/>
        <end position="314"/>
    </location>
</feature>
<feature type="strand" evidence="2">
    <location>
        <begin position="323"/>
        <end position="330"/>
    </location>
</feature>
<feature type="strand" evidence="2">
    <location>
        <begin position="338"/>
        <end position="345"/>
    </location>
</feature>
<feature type="strand" evidence="2">
    <location>
        <begin position="348"/>
        <end position="350"/>
    </location>
</feature>
<feature type="helix" evidence="2">
    <location>
        <begin position="352"/>
        <end position="358"/>
    </location>
</feature>
<feature type="helix" evidence="2">
    <location>
        <begin position="363"/>
        <end position="368"/>
    </location>
</feature>
<feature type="strand" evidence="2">
    <location>
        <begin position="376"/>
        <end position="380"/>
    </location>
</feature>
<feature type="strand" evidence="2">
    <location>
        <begin position="383"/>
        <end position="385"/>
    </location>
</feature>
<protein>
    <recommendedName>
        <fullName evidence="1">Alanine racemase 2</fullName>
        <ecNumber evidence="1">5.1.1.1</ecNumber>
    </recommendedName>
</protein>
<comment type="function">
    <text evidence="1">Catalyzes the interconversion of L-alanine and D-alanine. May also act on other amino acids.</text>
</comment>
<comment type="catalytic activity">
    <reaction evidence="1">
        <text>L-alanine = D-alanine</text>
        <dbReference type="Rhea" id="RHEA:20249"/>
        <dbReference type="ChEBI" id="CHEBI:57416"/>
        <dbReference type="ChEBI" id="CHEBI:57972"/>
        <dbReference type="EC" id="5.1.1.1"/>
    </reaction>
</comment>
<comment type="cofactor">
    <cofactor evidence="1">
        <name>pyridoxal 5'-phosphate</name>
        <dbReference type="ChEBI" id="CHEBI:597326"/>
    </cofactor>
</comment>
<comment type="pathway">
    <text evidence="1">Amino-acid biosynthesis; D-alanine biosynthesis; D-alanine from L-alanine: step 1/1.</text>
</comment>
<comment type="similarity">
    <text evidence="1">Belongs to the alanine racemase family.</text>
</comment>
<keyword id="KW-0002">3D-structure</keyword>
<keyword id="KW-0413">Isomerase</keyword>
<keyword id="KW-0663">Pyridoxal phosphate</keyword>
<keyword id="KW-1185">Reference proteome</keyword>
<accession>P94494</accession>
<dbReference type="EC" id="5.1.1.1" evidence="1"/>
<dbReference type="EMBL" id="U66480">
    <property type="protein sequence ID" value="AAB41097.1"/>
    <property type="molecule type" value="Genomic_DNA"/>
</dbReference>
<dbReference type="EMBL" id="AL009126">
    <property type="protein sequence ID" value="CAB13648.1"/>
    <property type="molecule type" value="Genomic_DNA"/>
</dbReference>
<dbReference type="PIR" id="F69888">
    <property type="entry name" value="F69888"/>
</dbReference>
<dbReference type="PDB" id="5IRP">
    <property type="method" value="X-ray"/>
    <property type="resolution" value="2.10 A"/>
    <property type="chains" value="A/B=1-394"/>
</dbReference>
<dbReference type="PDB" id="6Q70">
    <property type="method" value="X-ray"/>
    <property type="resolution" value="2.05 A"/>
    <property type="chains" value="A/B=1-394"/>
</dbReference>
<dbReference type="PDB" id="6Q71">
    <property type="method" value="X-ray"/>
    <property type="resolution" value="1.92 A"/>
    <property type="chains" value="A/B=1-394"/>
</dbReference>
<dbReference type="PDB" id="6Q72">
    <property type="method" value="X-ray"/>
    <property type="resolution" value="3.00 A"/>
    <property type="chains" value="A/B/D/E=1-394"/>
</dbReference>
<dbReference type="PDB" id="8ZPE">
    <property type="method" value="X-ray"/>
    <property type="resolution" value="2.30 A"/>
    <property type="chains" value="A/B/C/D=1-394"/>
</dbReference>
<dbReference type="PDB" id="8ZPF">
    <property type="method" value="X-ray"/>
    <property type="resolution" value="2.30 A"/>
    <property type="chains" value="A/B/C/D=1-394"/>
</dbReference>
<dbReference type="PDB" id="8ZPG">
    <property type="method" value="X-ray"/>
    <property type="resolution" value="2.30 A"/>
    <property type="chains" value="A/B/C/D=1-394"/>
</dbReference>
<dbReference type="PDB" id="8ZPH">
    <property type="method" value="X-ray"/>
    <property type="resolution" value="2.30 A"/>
    <property type="chains" value="A/B/C/D=1-394"/>
</dbReference>
<dbReference type="PDB" id="9JT7">
    <property type="method" value="X-ray"/>
    <property type="resolution" value="2.30 A"/>
    <property type="chains" value="A/B/C/D=1-394"/>
</dbReference>
<dbReference type="PDBsum" id="5IRP"/>
<dbReference type="PDBsum" id="6Q70"/>
<dbReference type="PDBsum" id="6Q71"/>
<dbReference type="PDBsum" id="6Q72"/>
<dbReference type="PDBsum" id="8ZPE"/>
<dbReference type="PDBsum" id="8ZPF"/>
<dbReference type="PDBsum" id="8ZPG"/>
<dbReference type="PDBsum" id="8ZPH"/>
<dbReference type="PDBsum" id="9JT7"/>
<dbReference type="SMR" id="P94494"/>
<dbReference type="FunCoup" id="P94494">
    <property type="interactions" value="334"/>
</dbReference>
<dbReference type="STRING" id="224308.BSU17640"/>
<dbReference type="PaxDb" id="224308-BSU17640"/>
<dbReference type="EnsemblBacteria" id="CAB13648">
    <property type="protein sequence ID" value="CAB13648"/>
    <property type="gene ID" value="BSU_17640"/>
</dbReference>
<dbReference type="GeneID" id="939550"/>
<dbReference type="KEGG" id="bsu:BSU17640"/>
<dbReference type="PATRIC" id="fig|224308.179.peg.1915"/>
<dbReference type="eggNOG" id="COG0787">
    <property type="taxonomic scope" value="Bacteria"/>
</dbReference>
<dbReference type="InParanoid" id="P94494"/>
<dbReference type="OrthoDB" id="9813814at2"/>
<dbReference type="PhylomeDB" id="P94494"/>
<dbReference type="BioCyc" id="BSUB:BSU17640-MONOMER"/>
<dbReference type="BRENDA" id="5.1.1.1">
    <property type="organism ID" value="658"/>
</dbReference>
<dbReference type="SABIO-RK" id="P94494"/>
<dbReference type="UniPathway" id="UPA00042">
    <property type="reaction ID" value="UER00497"/>
</dbReference>
<dbReference type="Proteomes" id="UP000001570">
    <property type="component" value="Chromosome"/>
</dbReference>
<dbReference type="GO" id="GO:0005829">
    <property type="term" value="C:cytosol"/>
    <property type="evidence" value="ECO:0000318"/>
    <property type="project" value="GO_Central"/>
</dbReference>
<dbReference type="GO" id="GO:0008784">
    <property type="term" value="F:alanine racemase activity"/>
    <property type="evidence" value="ECO:0000318"/>
    <property type="project" value="GO_Central"/>
</dbReference>
<dbReference type="GO" id="GO:0030170">
    <property type="term" value="F:pyridoxal phosphate binding"/>
    <property type="evidence" value="ECO:0000318"/>
    <property type="project" value="GO_Central"/>
</dbReference>
<dbReference type="GO" id="GO:0030632">
    <property type="term" value="P:D-alanine biosynthetic process"/>
    <property type="evidence" value="ECO:0000318"/>
    <property type="project" value="GO_Central"/>
</dbReference>
<dbReference type="GO" id="GO:0009252">
    <property type="term" value="P:peptidoglycan biosynthetic process"/>
    <property type="evidence" value="ECO:0000318"/>
    <property type="project" value="GO_Central"/>
</dbReference>
<dbReference type="CDD" id="cd00430">
    <property type="entry name" value="PLPDE_III_AR"/>
    <property type="match status" value="1"/>
</dbReference>
<dbReference type="FunFam" id="2.40.37.10:FF:000006">
    <property type="entry name" value="Alanine racemase"/>
    <property type="match status" value="1"/>
</dbReference>
<dbReference type="FunFam" id="3.20.20.10:FF:000002">
    <property type="entry name" value="Alanine racemase"/>
    <property type="match status" value="1"/>
</dbReference>
<dbReference type="Gene3D" id="3.20.20.10">
    <property type="entry name" value="Alanine racemase"/>
    <property type="match status" value="1"/>
</dbReference>
<dbReference type="Gene3D" id="2.40.37.10">
    <property type="entry name" value="Lyase, Ornithine Decarboxylase, Chain A, domain 1"/>
    <property type="match status" value="1"/>
</dbReference>
<dbReference type="HAMAP" id="MF_01201">
    <property type="entry name" value="Ala_racemase"/>
    <property type="match status" value="1"/>
</dbReference>
<dbReference type="InterPro" id="IPR000821">
    <property type="entry name" value="Ala_racemase"/>
</dbReference>
<dbReference type="InterPro" id="IPR009006">
    <property type="entry name" value="Ala_racemase/Decarboxylase_C"/>
</dbReference>
<dbReference type="InterPro" id="IPR011079">
    <property type="entry name" value="Ala_racemase_C"/>
</dbReference>
<dbReference type="InterPro" id="IPR001608">
    <property type="entry name" value="Ala_racemase_N"/>
</dbReference>
<dbReference type="InterPro" id="IPR020622">
    <property type="entry name" value="Ala_racemase_pyridoxalP-BS"/>
</dbReference>
<dbReference type="InterPro" id="IPR029066">
    <property type="entry name" value="PLP-binding_barrel"/>
</dbReference>
<dbReference type="NCBIfam" id="TIGR00492">
    <property type="entry name" value="alr"/>
    <property type="match status" value="1"/>
</dbReference>
<dbReference type="PANTHER" id="PTHR30511">
    <property type="entry name" value="ALANINE RACEMASE"/>
    <property type="match status" value="1"/>
</dbReference>
<dbReference type="PANTHER" id="PTHR30511:SF0">
    <property type="entry name" value="ALANINE RACEMASE, CATABOLIC-RELATED"/>
    <property type="match status" value="1"/>
</dbReference>
<dbReference type="Pfam" id="PF00842">
    <property type="entry name" value="Ala_racemase_C"/>
    <property type="match status" value="1"/>
</dbReference>
<dbReference type="Pfam" id="PF01168">
    <property type="entry name" value="Ala_racemase_N"/>
    <property type="match status" value="1"/>
</dbReference>
<dbReference type="PRINTS" id="PR00992">
    <property type="entry name" value="ALARACEMASE"/>
</dbReference>
<dbReference type="SMART" id="SM01005">
    <property type="entry name" value="Ala_racemase_C"/>
    <property type="match status" value="1"/>
</dbReference>
<dbReference type="SUPFAM" id="SSF50621">
    <property type="entry name" value="Alanine racemase C-terminal domain-like"/>
    <property type="match status" value="1"/>
</dbReference>
<dbReference type="SUPFAM" id="SSF51419">
    <property type="entry name" value="PLP-binding barrel"/>
    <property type="match status" value="1"/>
</dbReference>
<dbReference type="PROSITE" id="PS00395">
    <property type="entry name" value="ALANINE_RACEMASE"/>
    <property type="match status" value="1"/>
</dbReference>
<proteinExistence type="evidence at protein level"/>
<organism>
    <name type="scientific">Bacillus subtilis (strain 168)</name>
    <dbReference type="NCBI Taxonomy" id="224308"/>
    <lineage>
        <taxon>Bacteria</taxon>
        <taxon>Bacillati</taxon>
        <taxon>Bacillota</taxon>
        <taxon>Bacilli</taxon>
        <taxon>Bacillales</taxon>
        <taxon>Bacillaceae</taxon>
        <taxon>Bacillus</taxon>
    </lineage>
</organism>
<reference key="1">
    <citation type="submission" date="1997-02" db="EMBL/GenBank/DDBJ databases">
        <title>Sequencing of a 26 kb region of the Bacillus subtilis genome downstream of spoVJ.</title>
        <authorList>
            <person name="Borchert S."/>
            <person name="Klein C."/>
            <person name="Piksa B."/>
            <person name="Hammelmann M."/>
            <person name="Entian K.-D."/>
        </authorList>
    </citation>
    <scope>NUCLEOTIDE SEQUENCE [GENOMIC DNA]</scope>
</reference>
<reference key="2">
    <citation type="journal article" date="1997" name="Nature">
        <title>The complete genome sequence of the Gram-positive bacterium Bacillus subtilis.</title>
        <authorList>
            <person name="Kunst F."/>
            <person name="Ogasawara N."/>
            <person name="Moszer I."/>
            <person name="Albertini A.M."/>
            <person name="Alloni G."/>
            <person name="Azevedo V."/>
            <person name="Bertero M.G."/>
            <person name="Bessieres P."/>
            <person name="Bolotin A."/>
            <person name="Borchert S."/>
            <person name="Borriss R."/>
            <person name="Boursier L."/>
            <person name="Brans A."/>
            <person name="Braun M."/>
            <person name="Brignell S.C."/>
            <person name="Bron S."/>
            <person name="Brouillet S."/>
            <person name="Bruschi C.V."/>
            <person name="Caldwell B."/>
            <person name="Capuano V."/>
            <person name="Carter N.M."/>
            <person name="Choi S.-K."/>
            <person name="Codani J.-J."/>
            <person name="Connerton I.F."/>
            <person name="Cummings N.J."/>
            <person name="Daniel R.A."/>
            <person name="Denizot F."/>
            <person name="Devine K.M."/>
            <person name="Duesterhoeft A."/>
            <person name="Ehrlich S.D."/>
            <person name="Emmerson P.T."/>
            <person name="Entian K.-D."/>
            <person name="Errington J."/>
            <person name="Fabret C."/>
            <person name="Ferrari E."/>
            <person name="Foulger D."/>
            <person name="Fritz C."/>
            <person name="Fujita M."/>
            <person name="Fujita Y."/>
            <person name="Fuma S."/>
            <person name="Galizzi A."/>
            <person name="Galleron N."/>
            <person name="Ghim S.-Y."/>
            <person name="Glaser P."/>
            <person name="Goffeau A."/>
            <person name="Golightly E.J."/>
            <person name="Grandi G."/>
            <person name="Guiseppi G."/>
            <person name="Guy B.J."/>
            <person name="Haga K."/>
            <person name="Haiech J."/>
            <person name="Harwood C.R."/>
            <person name="Henaut A."/>
            <person name="Hilbert H."/>
            <person name="Holsappel S."/>
            <person name="Hosono S."/>
            <person name="Hullo M.-F."/>
            <person name="Itaya M."/>
            <person name="Jones L.-M."/>
            <person name="Joris B."/>
            <person name="Karamata D."/>
            <person name="Kasahara Y."/>
            <person name="Klaerr-Blanchard M."/>
            <person name="Klein C."/>
            <person name="Kobayashi Y."/>
            <person name="Koetter P."/>
            <person name="Koningstein G."/>
            <person name="Krogh S."/>
            <person name="Kumano M."/>
            <person name="Kurita K."/>
            <person name="Lapidus A."/>
            <person name="Lardinois S."/>
            <person name="Lauber J."/>
            <person name="Lazarevic V."/>
            <person name="Lee S.-M."/>
            <person name="Levine A."/>
            <person name="Liu H."/>
            <person name="Masuda S."/>
            <person name="Mauel C."/>
            <person name="Medigue C."/>
            <person name="Medina N."/>
            <person name="Mellado R.P."/>
            <person name="Mizuno M."/>
            <person name="Moestl D."/>
            <person name="Nakai S."/>
            <person name="Noback M."/>
            <person name="Noone D."/>
            <person name="O'Reilly M."/>
            <person name="Ogawa K."/>
            <person name="Ogiwara A."/>
            <person name="Oudega B."/>
            <person name="Park S.-H."/>
            <person name="Parro V."/>
            <person name="Pohl T.M."/>
            <person name="Portetelle D."/>
            <person name="Porwollik S."/>
            <person name="Prescott A.M."/>
            <person name="Presecan E."/>
            <person name="Pujic P."/>
            <person name="Purnelle B."/>
            <person name="Rapoport G."/>
            <person name="Rey M."/>
            <person name="Reynolds S."/>
            <person name="Rieger M."/>
            <person name="Rivolta C."/>
            <person name="Rocha E."/>
            <person name="Roche B."/>
            <person name="Rose M."/>
            <person name="Sadaie Y."/>
            <person name="Sato T."/>
            <person name="Scanlan E."/>
            <person name="Schleich S."/>
            <person name="Schroeter R."/>
            <person name="Scoffone F."/>
            <person name="Sekiguchi J."/>
            <person name="Sekowska A."/>
            <person name="Seror S.J."/>
            <person name="Serror P."/>
            <person name="Shin B.-S."/>
            <person name="Soldo B."/>
            <person name="Sorokin A."/>
            <person name="Tacconi E."/>
            <person name="Takagi T."/>
            <person name="Takahashi H."/>
            <person name="Takemaru K."/>
            <person name="Takeuchi M."/>
            <person name="Tamakoshi A."/>
            <person name="Tanaka T."/>
            <person name="Terpstra P."/>
            <person name="Tognoni A."/>
            <person name="Tosato V."/>
            <person name="Uchiyama S."/>
            <person name="Vandenbol M."/>
            <person name="Vannier F."/>
            <person name="Vassarotti A."/>
            <person name="Viari A."/>
            <person name="Wambutt R."/>
            <person name="Wedler E."/>
            <person name="Wedler H."/>
            <person name="Weitzenegger T."/>
            <person name="Winters P."/>
            <person name="Wipat A."/>
            <person name="Yamamoto H."/>
            <person name="Yamane K."/>
            <person name="Yasumoto K."/>
            <person name="Yata K."/>
            <person name="Yoshida K."/>
            <person name="Yoshikawa H.-F."/>
            <person name="Zumstein E."/>
            <person name="Yoshikawa H."/>
            <person name="Danchin A."/>
        </authorList>
    </citation>
    <scope>NUCLEOTIDE SEQUENCE [LARGE SCALE GENOMIC DNA]</scope>
    <source>
        <strain>168</strain>
    </source>
</reference>
<gene>
    <name type="primary">alr2</name>
    <name type="synonym">yncD</name>
    <name type="ordered locus">BSU17640</name>
</gene>
<name>ALR2_BACSU</name>
<sequence>MIKLCREVWIEVNLDAVKKNLRAIRRHIPHKSKIMAVVKANGYGHGSIEVARHALEHGASELAVASVEEGIVLRKAGITAPILVLGFTSLSCVKKSAAWNITLSAFQVDWMKEANEILEKEASANRLAIHINVDTGMGRLGVRTKEELLEVVKALKASKFLRWTGIFTHFSTADEPDTTLTKLQHEKFISFLSFLKKQGIELPTVHMCNTAAAIAFPEFSADMIRLGIGLYGLYPSAYIKQLNLVKLEPALSLKARIAYVKTMRTEPRTVSYGATYIAEPNEVIATLPIGYADGYSRALSNRGFVLHRGKRVPVAGRVTMDMIMVSLGENGEGKQGDEVVIYGKQKGAEISVDEVAEMLNTINYEVVSTLSRRIPRFYIRDGEIFKVSTPVLYV</sequence>
<evidence type="ECO:0000255" key="1">
    <source>
        <dbReference type="HAMAP-Rule" id="MF_01201"/>
    </source>
</evidence>
<evidence type="ECO:0007829" key="2">
    <source>
        <dbReference type="PDB" id="6Q71"/>
    </source>
</evidence>